<name>RL28_GLUDA</name>
<dbReference type="EMBL" id="AM889285">
    <property type="protein sequence ID" value="CAP57009.1"/>
    <property type="molecule type" value="Genomic_DNA"/>
</dbReference>
<dbReference type="EMBL" id="CP001189">
    <property type="protein sequence ID" value="ACI53029.1"/>
    <property type="molecule type" value="Genomic_DNA"/>
</dbReference>
<dbReference type="RefSeq" id="WP_012227397.1">
    <property type="nucleotide sequence ID" value="NC_011365.1"/>
</dbReference>
<dbReference type="SMR" id="A9HS05"/>
<dbReference type="STRING" id="272568.GDI3066"/>
<dbReference type="KEGG" id="gdi:GDI3066"/>
<dbReference type="KEGG" id="gdj:Gdia_3302"/>
<dbReference type="eggNOG" id="COG0227">
    <property type="taxonomic scope" value="Bacteria"/>
</dbReference>
<dbReference type="HOGENOM" id="CLU_064548_4_2_5"/>
<dbReference type="OrthoDB" id="9805609at2"/>
<dbReference type="Proteomes" id="UP000001176">
    <property type="component" value="Chromosome"/>
</dbReference>
<dbReference type="GO" id="GO:0022625">
    <property type="term" value="C:cytosolic large ribosomal subunit"/>
    <property type="evidence" value="ECO:0007669"/>
    <property type="project" value="TreeGrafter"/>
</dbReference>
<dbReference type="GO" id="GO:0003735">
    <property type="term" value="F:structural constituent of ribosome"/>
    <property type="evidence" value="ECO:0007669"/>
    <property type="project" value="InterPro"/>
</dbReference>
<dbReference type="GO" id="GO:0006412">
    <property type="term" value="P:translation"/>
    <property type="evidence" value="ECO:0007669"/>
    <property type="project" value="UniProtKB-UniRule"/>
</dbReference>
<dbReference type="Gene3D" id="2.30.170.40">
    <property type="entry name" value="Ribosomal protein L28/L24"/>
    <property type="match status" value="1"/>
</dbReference>
<dbReference type="HAMAP" id="MF_00373">
    <property type="entry name" value="Ribosomal_bL28"/>
    <property type="match status" value="1"/>
</dbReference>
<dbReference type="InterPro" id="IPR026569">
    <property type="entry name" value="Ribosomal_bL28"/>
</dbReference>
<dbReference type="InterPro" id="IPR034704">
    <property type="entry name" value="Ribosomal_bL28/bL31-like_sf"/>
</dbReference>
<dbReference type="InterPro" id="IPR001383">
    <property type="entry name" value="Ribosomal_bL28_bact-type"/>
</dbReference>
<dbReference type="InterPro" id="IPR037147">
    <property type="entry name" value="Ribosomal_bL28_sf"/>
</dbReference>
<dbReference type="NCBIfam" id="TIGR00009">
    <property type="entry name" value="L28"/>
    <property type="match status" value="1"/>
</dbReference>
<dbReference type="PANTHER" id="PTHR13528">
    <property type="entry name" value="39S RIBOSOMAL PROTEIN L28, MITOCHONDRIAL"/>
    <property type="match status" value="1"/>
</dbReference>
<dbReference type="PANTHER" id="PTHR13528:SF2">
    <property type="entry name" value="LARGE RIBOSOMAL SUBUNIT PROTEIN BL28M"/>
    <property type="match status" value="1"/>
</dbReference>
<dbReference type="Pfam" id="PF00830">
    <property type="entry name" value="Ribosomal_L28"/>
    <property type="match status" value="1"/>
</dbReference>
<dbReference type="SUPFAM" id="SSF143800">
    <property type="entry name" value="L28p-like"/>
    <property type="match status" value="1"/>
</dbReference>
<sequence>MSRRCQITGKGVLTGNNVSHANNKSRRRFLPNLQETSLLSDILGSAVRLRLSTNGIRTVEHNGGLDAFLLSTPNRKLPTEAQALKRRILRAKEKKAEATA</sequence>
<organism>
    <name type="scientific">Gluconacetobacter diazotrophicus (strain ATCC 49037 / DSM 5601 / CCUG 37298 / CIP 103539 / LMG 7603 / PAl5)</name>
    <dbReference type="NCBI Taxonomy" id="272568"/>
    <lineage>
        <taxon>Bacteria</taxon>
        <taxon>Pseudomonadati</taxon>
        <taxon>Pseudomonadota</taxon>
        <taxon>Alphaproteobacteria</taxon>
        <taxon>Acetobacterales</taxon>
        <taxon>Acetobacteraceae</taxon>
        <taxon>Gluconacetobacter</taxon>
    </lineage>
</organism>
<feature type="chain" id="PRO_1000079852" description="Large ribosomal subunit protein bL28">
    <location>
        <begin position="1"/>
        <end position="100"/>
    </location>
</feature>
<comment type="similarity">
    <text evidence="1">Belongs to the bacterial ribosomal protein bL28 family.</text>
</comment>
<evidence type="ECO:0000255" key="1">
    <source>
        <dbReference type="HAMAP-Rule" id="MF_00373"/>
    </source>
</evidence>
<evidence type="ECO:0000305" key="2"/>
<protein>
    <recommendedName>
        <fullName evidence="1">Large ribosomal subunit protein bL28</fullName>
    </recommendedName>
    <alternativeName>
        <fullName evidence="2">50S ribosomal protein L28</fullName>
    </alternativeName>
</protein>
<keyword id="KW-1185">Reference proteome</keyword>
<keyword id="KW-0687">Ribonucleoprotein</keyword>
<keyword id="KW-0689">Ribosomal protein</keyword>
<gene>
    <name evidence="1" type="primary">rpmB</name>
    <name type="ordered locus">GDI3066</name>
    <name type="ordered locus">Gdia_3302</name>
</gene>
<accession>A9HS05</accession>
<accession>B5ZL87</accession>
<reference key="1">
    <citation type="journal article" date="2009" name="BMC Genomics">
        <title>Complete genome sequence of the sugarcane nitrogen-fixing endophyte Gluconacetobacter diazotrophicus Pal5.</title>
        <authorList>
            <person name="Bertalan M."/>
            <person name="Albano R."/>
            <person name="de Padua V."/>
            <person name="Rouws L."/>
            <person name="Rojas C."/>
            <person name="Hemerly A."/>
            <person name="Teixeira K."/>
            <person name="Schwab S."/>
            <person name="Araujo J."/>
            <person name="Oliveira A."/>
            <person name="Franca L."/>
            <person name="Magalhaes V."/>
            <person name="Alqueres S."/>
            <person name="Cardoso A."/>
            <person name="Almeida W."/>
            <person name="Loureiro M.M."/>
            <person name="Nogueira E."/>
            <person name="Cidade D."/>
            <person name="Oliveira D."/>
            <person name="Simao T."/>
            <person name="Macedo J."/>
            <person name="Valadao A."/>
            <person name="Dreschsel M."/>
            <person name="Freitas F."/>
            <person name="Vidal M."/>
            <person name="Guedes H."/>
            <person name="Rodrigues E."/>
            <person name="Meneses C."/>
            <person name="Brioso P."/>
            <person name="Pozzer L."/>
            <person name="Figueiredo D."/>
            <person name="Montano H."/>
            <person name="Junior J."/>
            <person name="de Souza Filho G."/>
            <person name="Martin Quintana Flores V."/>
            <person name="Ferreira B."/>
            <person name="Branco A."/>
            <person name="Gonzalez P."/>
            <person name="Guillobel H."/>
            <person name="Lemos M."/>
            <person name="Seibel L."/>
            <person name="Macedo J."/>
            <person name="Alves-Ferreira M."/>
            <person name="Sachetto-Martins G."/>
            <person name="Coelho A."/>
            <person name="Santos E."/>
            <person name="Amaral G."/>
            <person name="Neves A."/>
            <person name="Pacheco A.B."/>
            <person name="Carvalho D."/>
            <person name="Lery L."/>
            <person name="Bisch P."/>
            <person name="Rossle S.C."/>
            <person name="Urmenyi T."/>
            <person name="Rael Pereira A."/>
            <person name="Silva R."/>
            <person name="Rondinelli E."/>
            <person name="von Kruger W."/>
            <person name="Martins O."/>
            <person name="Baldani J.I."/>
            <person name="Ferreira P.C."/>
        </authorList>
    </citation>
    <scope>NUCLEOTIDE SEQUENCE [LARGE SCALE GENOMIC DNA]</scope>
    <source>
        <strain>ATCC 49037 / DSM 5601 / CCUG 37298 / CIP 103539 / LMG 7603 / PAl5</strain>
    </source>
</reference>
<reference key="2">
    <citation type="journal article" date="2010" name="Stand. Genomic Sci.">
        <title>Two genome sequences of the same bacterial strain, Gluconacetobacter diazotrophicus PAl 5, suggest a new standard in genome sequence submission.</title>
        <authorList>
            <person name="Giongo A."/>
            <person name="Tyler H.L."/>
            <person name="Zipperer U.N."/>
            <person name="Triplett E.W."/>
        </authorList>
    </citation>
    <scope>NUCLEOTIDE SEQUENCE [LARGE SCALE GENOMIC DNA]</scope>
    <source>
        <strain>ATCC 49037 / DSM 5601 / CCUG 37298 / CIP 103539 / LMG 7603 / PAl5</strain>
    </source>
</reference>
<proteinExistence type="inferred from homology"/>